<evidence type="ECO:0000255" key="1">
    <source>
        <dbReference type="HAMAP-Rule" id="MF_02114"/>
    </source>
</evidence>
<reference key="1">
    <citation type="journal article" date="2015" name="Genome Announc.">
        <title>Complete Genome Sequence of Methanosphaerula palustris E1-9CT, a Hydrogenotrophic Methanogen Isolated from a Minerotrophic Fen Peatland.</title>
        <authorList>
            <person name="Cadillo-Quiroz H."/>
            <person name="Browne P."/>
            <person name="Kyrpides N."/>
            <person name="Woyke T."/>
            <person name="Goodwin L."/>
            <person name="Detter C."/>
            <person name="Yavitt J.B."/>
            <person name="Zinder S.H."/>
        </authorList>
    </citation>
    <scope>NUCLEOTIDE SEQUENCE [LARGE SCALE GENOMIC DNA]</scope>
    <source>
        <strain>ATCC BAA-1556 / DSM 19958 / E1-9c</strain>
    </source>
</reference>
<accession>B8GKC0</accession>
<organism>
    <name type="scientific">Methanosphaerula palustris (strain ATCC BAA-1556 / DSM 19958 / E1-9c)</name>
    <dbReference type="NCBI Taxonomy" id="521011"/>
    <lineage>
        <taxon>Archaea</taxon>
        <taxon>Methanobacteriati</taxon>
        <taxon>Methanobacteriota</taxon>
        <taxon>Stenosarchaea group</taxon>
        <taxon>Methanomicrobia</taxon>
        <taxon>Methanomicrobiales</taxon>
        <taxon>Methanoregulaceae</taxon>
        <taxon>Methanosphaerula</taxon>
    </lineage>
</organism>
<feature type="chain" id="PRO_0000398759" description="2-phospho-L-lactate guanylyltransferase">
    <location>
        <begin position="1"/>
        <end position="209"/>
    </location>
</feature>
<keyword id="KW-0342">GTP-binding</keyword>
<keyword id="KW-0547">Nucleotide-binding</keyword>
<keyword id="KW-0548">Nucleotidyltransferase</keyword>
<keyword id="KW-1185">Reference proteome</keyword>
<keyword id="KW-0808">Transferase</keyword>
<comment type="function">
    <text evidence="1">Guanylyltransferase that catalyzes the activation of (2S)-2-phospholactate (2-PL) as (2S)-lactyl-2-diphospho-5'-guanosine, via the condensation of 2-PL with GTP. It is involved in the biosynthesis of coenzyme F420, a hydride carrier cofactor.</text>
</comment>
<comment type="catalytic activity">
    <reaction evidence="1">
        <text>(2S)-2-phospholactate + GTP + H(+) = (2S)-lactyl-2-diphospho-5'-guanosine + diphosphate</text>
        <dbReference type="Rhea" id="RHEA:63424"/>
        <dbReference type="ChEBI" id="CHEBI:15378"/>
        <dbReference type="ChEBI" id="CHEBI:33019"/>
        <dbReference type="ChEBI" id="CHEBI:37565"/>
        <dbReference type="ChEBI" id="CHEBI:59435"/>
        <dbReference type="ChEBI" id="CHEBI:59906"/>
        <dbReference type="EC" id="2.7.7.68"/>
    </reaction>
</comment>
<comment type="pathway">
    <text evidence="1">Cofactor biosynthesis; coenzyme F420 biosynthesis.</text>
</comment>
<comment type="subunit">
    <text evidence="1">Homodimer.</text>
</comment>
<comment type="similarity">
    <text evidence="1">Belongs to the CofC family.</text>
</comment>
<dbReference type="EC" id="2.7.7.68" evidence="1"/>
<dbReference type="EMBL" id="CP001338">
    <property type="protein sequence ID" value="ACL15803.1"/>
    <property type="molecule type" value="Genomic_DNA"/>
</dbReference>
<dbReference type="RefSeq" id="WP_012617122.1">
    <property type="nucleotide sequence ID" value="NC_011832.1"/>
</dbReference>
<dbReference type="SMR" id="B8GKC0"/>
<dbReference type="STRING" id="521011.Mpal_0429"/>
<dbReference type="GeneID" id="7271455"/>
<dbReference type="KEGG" id="mpl:Mpal_0429"/>
<dbReference type="eggNOG" id="arCOG04472">
    <property type="taxonomic scope" value="Archaea"/>
</dbReference>
<dbReference type="HOGENOM" id="CLU_076569_2_0_2"/>
<dbReference type="OrthoDB" id="11179at2157"/>
<dbReference type="UniPathway" id="UPA00071"/>
<dbReference type="Proteomes" id="UP000002457">
    <property type="component" value="Chromosome"/>
</dbReference>
<dbReference type="GO" id="GO:0005525">
    <property type="term" value="F:GTP binding"/>
    <property type="evidence" value="ECO:0007669"/>
    <property type="project" value="UniProtKB-KW"/>
</dbReference>
<dbReference type="GO" id="GO:0043814">
    <property type="term" value="F:phospholactate guanylyltransferase activity"/>
    <property type="evidence" value="ECO:0007669"/>
    <property type="project" value="UniProtKB-EC"/>
</dbReference>
<dbReference type="GO" id="GO:0052645">
    <property type="term" value="P:F420-0 metabolic process"/>
    <property type="evidence" value="ECO:0007669"/>
    <property type="project" value="UniProtKB-UniRule"/>
</dbReference>
<dbReference type="Gene3D" id="6.10.140.50">
    <property type="match status" value="1"/>
</dbReference>
<dbReference type="Gene3D" id="3.90.550.10">
    <property type="entry name" value="Spore Coat Polysaccharide Biosynthesis Protein SpsA, Chain A"/>
    <property type="match status" value="1"/>
</dbReference>
<dbReference type="HAMAP" id="MF_02114">
    <property type="entry name" value="CofC"/>
    <property type="match status" value="1"/>
</dbReference>
<dbReference type="InterPro" id="IPR002835">
    <property type="entry name" value="CofC"/>
</dbReference>
<dbReference type="InterPro" id="IPR029044">
    <property type="entry name" value="Nucleotide-diphossugar_trans"/>
</dbReference>
<dbReference type="NCBIfam" id="TIGR03552">
    <property type="entry name" value="F420_cofC"/>
    <property type="match status" value="1"/>
</dbReference>
<dbReference type="PANTHER" id="PTHR40392">
    <property type="entry name" value="2-PHOSPHO-L-LACTATE GUANYLYLTRANSFERASE"/>
    <property type="match status" value="1"/>
</dbReference>
<dbReference type="PANTHER" id="PTHR40392:SF1">
    <property type="entry name" value="2-PHOSPHO-L-LACTATE GUANYLYLTRANSFERASE"/>
    <property type="match status" value="1"/>
</dbReference>
<dbReference type="Pfam" id="PF01983">
    <property type="entry name" value="CofC"/>
    <property type="match status" value="1"/>
</dbReference>
<dbReference type="SUPFAM" id="SSF53448">
    <property type="entry name" value="Nucleotide-diphospho-sugar transferases"/>
    <property type="match status" value="1"/>
</dbReference>
<name>COFC_METPE</name>
<protein>
    <recommendedName>
        <fullName evidence="1">2-phospho-L-lactate guanylyltransferase</fullName>
        <shortName evidence="1">LP guanylyltransferase</shortName>
        <ecNumber evidence="1">2.7.7.68</ecNumber>
    </recommendedName>
</protein>
<sequence length="209" mass="22476">MTPLAVIPFRPLNPKSRLSGIMTREERELFAAAMLTDVIGAVTAAGCTPLVLATTPYTVASVRVRVTDADLSTALNTLLRDQDGPVLIMMADIPLATKEAITAVISADADVAIVPGRGGGTNAIYLQQGSSFATDYYGQSFMKHCRIAEERNLSLEVIDSFRLYVDIDEEEDLVDLLIHGTGESAALLRSFGFQPISMKGRVSVIRSSP</sequence>
<gene>
    <name evidence="1" type="primary">cofC</name>
    <name type="ordered locus">Mpal_0429</name>
</gene>
<proteinExistence type="inferred from homology"/>